<organism>
    <name type="scientific">Arabidopsis thaliana</name>
    <name type="common">Mouse-ear cress</name>
    <dbReference type="NCBI Taxonomy" id="3702"/>
    <lineage>
        <taxon>Eukaryota</taxon>
        <taxon>Viridiplantae</taxon>
        <taxon>Streptophyta</taxon>
        <taxon>Embryophyta</taxon>
        <taxon>Tracheophyta</taxon>
        <taxon>Spermatophyta</taxon>
        <taxon>Magnoliopsida</taxon>
        <taxon>eudicotyledons</taxon>
        <taxon>Gunneridae</taxon>
        <taxon>Pentapetalae</taxon>
        <taxon>rosids</taxon>
        <taxon>malvids</taxon>
        <taxon>Brassicales</taxon>
        <taxon>Brassicaceae</taxon>
        <taxon>Camelineae</taxon>
        <taxon>Arabidopsis</taxon>
    </lineage>
</organism>
<keyword id="KW-0002">3D-structure</keyword>
<keyword id="KW-0520">NAD</keyword>
<keyword id="KW-0560">Oxidoreductase</keyword>
<keyword id="KW-1185">Reference proteome</keyword>
<keyword id="KW-0677">Repeat</keyword>
<sequence>MAETSKQVNGDDAQDLHSLLSSPARDFLVRNDGEQVKVDSLLGKKIGLYFSAAWCGPCQRFTPQLVEVYNELSSKVGFEIVFVSGDEDEESFGDYFRKMPWLAVPFTDSETRDRLDELFKVRGIPNLVMVDDHGKLVNENGVGVIRSYGADAYPFTPEKMKEIKEDEDRARRGQTLRSVLVTPSRDFVISPDGNKVPVSELEGKTIGLLFSVASYRKCTELTPKLVEFYTKLKENKEDFEIVLISLEDDEESFNQDFKTKPWLALPFNDKSGSKLARHFMLSTLPTLVILGPDGKTRHSNVAEAIDDYGVLAYPFTPEKFQELKELEKAKVEAQTLESLLVSGDLNYVLGKDGAKVLVSDLVGKTILMYFSAHWCPPCRAFTPKLVEVYKQIKERNEAFELIFISSDRDQESFDEYYSQMPWLALPFGDPRKASLAKTFKVGGIPMLAALGPTGQTVTKEARDLVVAHGADAYPFTEERLKEIEAKYDEIAKDWPKKVKHVLHEEHELELTRVQVYTCDKCEEEGTIWSYHCDECDFDLHAKCALNEDTKENGDEAVKVGGDESKDGWVCEGNVCTKA</sequence>
<reference key="1">
    <citation type="journal article" date="2000" name="Nature">
        <title>Sequence and analysis of chromosome 1 of the plant Arabidopsis thaliana.</title>
        <authorList>
            <person name="Theologis A."/>
            <person name="Ecker J.R."/>
            <person name="Palm C.J."/>
            <person name="Federspiel N.A."/>
            <person name="Kaul S."/>
            <person name="White O."/>
            <person name="Alonso J."/>
            <person name="Altafi H."/>
            <person name="Araujo R."/>
            <person name="Bowman C.L."/>
            <person name="Brooks S.Y."/>
            <person name="Buehler E."/>
            <person name="Chan A."/>
            <person name="Chao Q."/>
            <person name="Chen H."/>
            <person name="Cheuk R.F."/>
            <person name="Chin C.W."/>
            <person name="Chung M.K."/>
            <person name="Conn L."/>
            <person name="Conway A.B."/>
            <person name="Conway A.R."/>
            <person name="Creasy T.H."/>
            <person name="Dewar K."/>
            <person name="Dunn P."/>
            <person name="Etgu P."/>
            <person name="Feldblyum T.V."/>
            <person name="Feng J.-D."/>
            <person name="Fong B."/>
            <person name="Fujii C.Y."/>
            <person name="Gill J.E."/>
            <person name="Goldsmith A.D."/>
            <person name="Haas B."/>
            <person name="Hansen N.F."/>
            <person name="Hughes B."/>
            <person name="Huizar L."/>
            <person name="Hunter J.L."/>
            <person name="Jenkins J."/>
            <person name="Johnson-Hopson C."/>
            <person name="Khan S."/>
            <person name="Khaykin E."/>
            <person name="Kim C.J."/>
            <person name="Koo H.L."/>
            <person name="Kremenetskaia I."/>
            <person name="Kurtz D.B."/>
            <person name="Kwan A."/>
            <person name="Lam B."/>
            <person name="Langin-Hooper S."/>
            <person name="Lee A."/>
            <person name="Lee J.M."/>
            <person name="Lenz C.A."/>
            <person name="Li J.H."/>
            <person name="Li Y.-P."/>
            <person name="Lin X."/>
            <person name="Liu S.X."/>
            <person name="Liu Z.A."/>
            <person name="Luros J.S."/>
            <person name="Maiti R."/>
            <person name="Marziali A."/>
            <person name="Militscher J."/>
            <person name="Miranda M."/>
            <person name="Nguyen M."/>
            <person name="Nierman W.C."/>
            <person name="Osborne B.I."/>
            <person name="Pai G."/>
            <person name="Peterson J."/>
            <person name="Pham P.K."/>
            <person name="Rizzo M."/>
            <person name="Rooney T."/>
            <person name="Rowley D."/>
            <person name="Sakano H."/>
            <person name="Salzberg S.L."/>
            <person name="Schwartz J.R."/>
            <person name="Shinn P."/>
            <person name="Southwick A.M."/>
            <person name="Sun H."/>
            <person name="Tallon L.J."/>
            <person name="Tambunga G."/>
            <person name="Toriumi M.J."/>
            <person name="Town C.D."/>
            <person name="Utterback T."/>
            <person name="Van Aken S."/>
            <person name="Vaysberg M."/>
            <person name="Vysotskaia V.S."/>
            <person name="Walker M."/>
            <person name="Wu D."/>
            <person name="Yu G."/>
            <person name="Fraser C.M."/>
            <person name="Venter J.C."/>
            <person name="Davis R.W."/>
        </authorList>
    </citation>
    <scope>NUCLEOTIDE SEQUENCE [LARGE SCALE GENOMIC DNA]</scope>
    <source>
        <strain>cv. Columbia</strain>
    </source>
</reference>
<reference key="2">
    <citation type="journal article" date="2017" name="Plant J.">
        <title>Araport11: a complete reannotation of the Arabidopsis thaliana reference genome.</title>
        <authorList>
            <person name="Cheng C.Y."/>
            <person name="Krishnakumar V."/>
            <person name="Chan A.P."/>
            <person name="Thibaud-Nissen F."/>
            <person name="Schobel S."/>
            <person name="Town C.D."/>
        </authorList>
    </citation>
    <scope>GENOME REANNOTATION</scope>
    <source>
        <strain>cv. Columbia</strain>
    </source>
</reference>
<reference key="3">
    <citation type="journal article" date="2003" name="Science">
        <title>Empirical analysis of transcriptional activity in the Arabidopsis genome.</title>
        <authorList>
            <person name="Yamada K."/>
            <person name="Lim J."/>
            <person name="Dale J.M."/>
            <person name="Chen H."/>
            <person name="Shinn P."/>
            <person name="Palm C.J."/>
            <person name="Southwick A.M."/>
            <person name="Wu H.C."/>
            <person name="Kim C.J."/>
            <person name="Nguyen M."/>
            <person name="Pham P.K."/>
            <person name="Cheuk R.F."/>
            <person name="Karlin-Newmann G."/>
            <person name="Liu S.X."/>
            <person name="Lam B."/>
            <person name="Sakano H."/>
            <person name="Wu T."/>
            <person name="Yu G."/>
            <person name="Miranda M."/>
            <person name="Quach H.L."/>
            <person name="Tripp M."/>
            <person name="Chang C.H."/>
            <person name="Lee J.M."/>
            <person name="Toriumi M.J."/>
            <person name="Chan M.M."/>
            <person name="Tang C.C."/>
            <person name="Onodera C.S."/>
            <person name="Deng J.M."/>
            <person name="Akiyama K."/>
            <person name="Ansari Y."/>
            <person name="Arakawa T."/>
            <person name="Banh J."/>
            <person name="Banno F."/>
            <person name="Bowser L."/>
            <person name="Brooks S.Y."/>
            <person name="Carninci P."/>
            <person name="Chao Q."/>
            <person name="Choy N."/>
            <person name="Enju A."/>
            <person name="Goldsmith A.D."/>
            <person name="Gurjal M."/>
            <person name="Hansen N.F."/>
            <person name="Hayashizaki Y."/>
            <person name="Johnson-Hopson C."/>
            <person name="Hsuan V.W."/>
            <person name="Iida K."/>
            <person name="Karnes M."/>
            <person name="Khan S."/>
            <person name="Koesema E."/>
            <person name="Ishida J."/>
            <person name="Jiang P.X."/>
            <person name="Jones T."/>
            <person name="Kawai J."/>
            <person name="Kamiya A."/>
            <person name="Meyers C."/>
            <person name="Nakajima M."/>
            <person name="Narusaka M."/>
            <person name="Seki M."/>
            <person name="Sakurai T."/>
            <person name="Satou M."/>
            <person name="Tamse R."/>
            <person name="Vaysberg M."/>
            <person name="Wallender E.K."/>
            <person name="Wong C."/>
            <person name="Yamamura Y."/>
            <person name="Yuan S."/>
            <person name="Shinozaki K."/>
            <person name="Davis R.W."/>
            <person name="Theologis A."/>
            <person name="Ecker J.R."/>
        </authorList>
    </citation>
    <scope>NUCLEOTIDE SEQUENCE [LARGE SCALE MRNA]</scope>
    <source>
        <strain>cv. Columbia</strain>
    </source>
</reference>
<reference key="4">
    <citation type="submission" date="2002-03" db="EMBL/GenBank/DDBJ databases">
        <title>Full-length cDNA from Arabidopsis thaliana.</title>
        <authorList>
            <person name="Brover V.V."/>
            <person name="Troukhan M.E."/>
            <person name="Alexandrov N.A."/>
            <person name="Lu Y.-P."/>
            <person name="Flavell R.B."/>
            <person name="Feldmann K.A."/>
        </authorList>
    </citation>
    <scope>NUCLEOTIDE SEQUENCE [LARGE SCALE MRNA]</scope>
</reference>
<reference key="5">
    <citation type="journal article" date="2009" name="Mol. Plant">
        <title>Comparative genomic study of the thioredoxin family in photosynthetic organisms with emphasis on Populus trichocarpa.</title>
        <authorList>
            <person name="Chibani K."/>
            <person name="Wingsle G."/>
            <person name="Jacquot J.P."/>
            <person name="Gelhaye E."/>
            <person name="Rouhier N."/>
        </authorList>
    </citation>
    <scope>GENE FAMILY</scope>
    <scope>NOMENCLATURE</scope>
</reference>
<reference key="6">
    <citation type="journal article" date="2009" name="PLoS Genet.">
        <title>Penetration of the stigma and style elicits a novel transcriptome in pollen tubes, pointing to genes critical for growth in a pistil.</title>
        <authorList>
            <person name="Qin Y."/>
            <person name="Leydon A.R."/>
            <person name="Manziello A."/>
            <person name="Pandey R."/>
            <person name="Mount D."/>
            <person name="Denic S."/>
            <person name="Vasic B."/>
            <person name="Johnson M.A."/>
            <person name="Palanivelu R."/>
        </authorList>
    </citation>
    <scope>FUNCTION</scope>
    <scope>DISRUPTION PHENOTYPE</scope>
</reference>
<reference key="7">
    <citation type="submission" date="2009-02" db="PDB data bank">
        <title>Solution structure of DC1 domain of PDI-like hypothetical protein from Arabidopsis thaliana.</title>
        <authorList>
            <consortium name="RIKEN structural genomics initiative (RSGI)"/>
        </authorList>
    </citation>
    <scope>STRUCTURE BY NMR OF 476-551</scope>
</reference>
<proteinExistence type="evidence at protein level"/>
<evidence type="ECO:0000255" key="1">
    <source>
        <dbReference type="PROSITE-ProRule" id="PRU00691"/>
    </source>
</evidence>
<evidence type="ECO:0000269" key="2">
    <source>
    </source>
</evidence>
<evidence type="ECO:0000305" key="3"/>
<evidence type="ECO:0007829" key="4">
    <source>
        <dbReference type="PDB" id="1V5N"/>
    </source>
</evidence>
<accession>O80763</accession>
<accession>Q8LB68</accession>
<gene>
    <name type="ordered locus">At1g60420</name>
    <name type="ORF">T13D8.29</name>
</gene>
<feature type="chain" id="PRO_0000394550" description="Probable nucleoredoxin 1">
    <location>
        <begin position="1"/>
        <end position="578"/>
    </location>
</feature>
<feature type="domain" description="Thioredoxin 1" evidence="1">
    <location>
        <begin position="18"/>
        <end position="172"/>
    </location>
</feature>
<feature type="domain" description="Thioredoxin 2" evidence="1">
    <location>
        <begin position="178"/>
        <end position="321"/>
    </location>
</feature>
<feature type="domain" description="Thioredoxin 3" evidence="1">
    <location>
        <begin position="325"/>
        <end position="485"/>
    </location>
</feature>
<feature type="sequence conflict" description="In Ref. 4; AAM64945." evidence="3" ref="4">
    <original>R</original>
    <variation>S</variation>
    <location>
        <position position="97"/>
    </location>
</feature>
<feature type="sequence conflict" description="In Ref. 4; AAM64945." evidence="3" ref="4">
    <original>G</original>
    <variation>E</variation>
    <location>
        <position position="173"/>
    </location>
</feature>
<feature type="sequence conflict" description="In Ref. 4; AAM64945." evidence="3" ref="4">
    <original>T</original>
    <variation>I</variation>
    <location>
        <position position="296"/>
    </location>
</feature>
<feature type="sequence conflict" description="In Ref. 4; AAM64945." evidence="3" ref="4">
    <original>S</original>
    <variation>C</variation>
    <location>
        <position position="529"/>
    </location>
</feature>
<feature type="sequence conflict" description="In Ref. 4; AAM64945." evidence="3" ref="4">
    <original>D</original>
    <variation>Y</variation>
    <location>
        <position position="548"/>
    </location>
</feature>
<feature type="helix" evidence="4">
    <location>
        <begin position="482"/>
        <end position="490"/>
    </location>
</feature>
<feature type="strand" evidence="4">
    <location>
        <begin position="492"/>
        <end position="494"/>
    </location>
</feature>
<feature type="strand" evidence="4">
    <location>
        <begin position="496"/>
        <end position="498"/>
    </location>
</feature>
<feature type="turn" evidence="4">
    <location>
        <begin position="502"/>
        <end position="505"/>
    </location>
</feature>
<feature type="strand" evidence="4">
    <location>
        <begin position="508"/>
        <end position="511"/>
    </location>
</feature>
<feature type="turn" evidence="4">
    <location>
        <begin position="519"/>
        <end position="521"/>
    </location>
</feature>
<feature type="strand" evidence="4">
    <location>
        <begin position="529"/>
        <end position="531"/>
    </location>
</feature>
<feature type="turn" evidence="4">
    <location>
        <begin position="533"/>
        <end position="535"/>
    </location>
</feature>
<feature type="helix" evidence="4">
    <location>
        <begin position="541"/>
        <end position="545"/>
    </location>
</feature>
<dbReference type="EC" id="1.8.1.8"/>
<dbReference type="EMBL" id="AC004473">
    <property type="protein sequence ID" value="AAC24068.1"/>
    <property type="molecule type" value="Genomic_DNA"/>
</dbReference>
<dbReference type="EMBL" id="CP002684">
    <property type="protein sequence ID" value="AEE33684.1"/>
    <property type="molecule type" value="Genomic_DNA"/>
</dbReference>
<dbReference type="EMBL" id="AY065433">
    <property type="protein sequence ID" value="AAL38874.1"/>
    <property type="molecule type" value="mRNA"/>
</dbReference>
<dbReference type="EMBL" id="AY117231">
    <property type="protein sequence ID" value="AAM51306.1"/>
    <property type="molecule type" value="mRNA"/>
</dbReference>
<dbReference type="EMBL" id="AY087396">
    <property type="protein sequence ID" value="AAM64945.1"/>
    <property type="molecule type" value="mRNA"/>
</dbReference>
<dbReference type="PIR" id="T02292">
    <property type="entry name" value="T02292"/>
</dbReference>
<dbReference type="RefSeq" id="NP_564756.1">
    <property type="nucleotide sequence ID" value="NM_104729.4"/>
</dbReference>
<dbReference type="PDB" id="1V5N">
    <property type="method" value="NMR"/>
    <property type="chains" value="A=476-551"/>
</dbReference>
<dbReference type="PDBsum" id="1V5N"/>
<dbReference type="SMR" id="O80763"/>
<dbReference type="BioGRID" id="27561">
    <property type="interactions" value="9"/>
</dbReference>
<dbReference type="FunCoup" id="O80763">
    <property type="interactions" value="695"/>
</dbReference>
<dbReference type="IntAct" id="O80763">
    <property type="interactions" value="2"/>
</dbReference>
<dbReference type="STRING" id="3702.O80763"/>
<dbReference type="iPTMnet" id="O80763"/>
<dbReference type="PaxDb" id="3702-AT1G60420.1"/>
<dbReference type="ProteomicsDB" id="250609"/>
<dbReference type="EnsemblPlants" id="AT1G60420.1">
    <property type="protein sequence ID" value="AT1G60420.1"/>
    <property type="gene ID" value="AT1G60420"/>
</dbReference>
<dbReference type="GeneID" id="842337"/>
<dbReference type="Gramene" id="AT1G60420.1">
    <property type="protein sequence ID" value="AT1G60420.1"/>
    <property type="gene ID" value="AT1G60420"/>
</dbReference>
<dbReference type="KEGG" id="ath:AT1G60420"/>
<dbReference type="Araport" id="AT1G60420"/>
<dbReference type="TAIR" id="AT1G60420">
    <property type="gene designation" value="NRX1"/>
</dbReference>
<dbReference type="eggNOG" id="KOG2501">
    <property type="taxonomic scope" value="Eukaryota"/>
</dbReference>
<dbReference type="HOGENOM" id="CLU_019626_1_0_1"/>
<dbReference type="InParanoid" id="O80763"/>
<dbReference type="OMA" id="WSYRCDE"/>
<dbReference type="PhylomeDB" id="O80763"/>
<dbReference type="EvolutionaryTrace" id="O80763"/>
<dbReference type="PRO" id="PR:O80763"/>
<dbReference type="Proteomes" id="UP000006548">
    <property type="component" value="Chromosome 1"/>
</dbReference>
<dbReference type="ExpressionAtlas" id="O80763">
    <property type="expression patterns" value="baseline and differential"/>
</dbReference>
<dbReference type="GO" id="GO:0005829">
    <property type="term" value="C:cytosol"/>
    <property type="evidence" value="ECO:0007005"/>
    <property type="project" value="TAIR"/>
</dbReference>
<dbReference type="GO" id="GO:0005634">
    <property type="term" value="C:nucleus"/>
    <property type="evidence" value="ECO:0007005"/>
    <property type="project" value="TAIR"/>
</dbReference>
<dbReference type="GO" id="GO:0004791">
    <property type="term" value="F:thioredoxin-disulfide reductase (NADPH) activity"/>
    <property type="evidence" value="ECO:0007669"/>
    <property type="project" value="InterPro"/>
</dbReference>
<dbReference type="GO" id="GO:0009860">
    <property type="term" value="P:pollen tube growth"/>
    <property type="evidence" value="ECO:0000315"/>
    <property type="project" value="TAIR"/>
</dbReference>
<dbReference type="GO" id="GO:0010183">
    <property type="term" value="P:pollen tube guidance"/>
    <property type="evidence" value="ECO:0000315"/>
    <property type="project" value="TAIR"/>
</dbReference>
<dbReference type="GO" id="GO:0080092">
    <property type="term" value="P:regulation of pollen tube growth"/>
    <property type="evidence" value="ECO:0000315"/>
    <property type="project" value="UniProtKB"/>
</dbReference>
<dbReference type="CDD" id="cd03009">
    <property type="entry name" value="TryX_like_TryX_NRX"/>
    <property type="match status" value="2"/>
</dbReference>
<dbReference type="FunFam" id="3.40.30.10:FF:000450">
    <property type="entry name" value="Probable nucleoredoxin 1"/>
    <property type="match status" value="1"/>
</dbReference>
<dbReference type="Gene3D" id="3.40.30.10">
    <property type="entry name" value="Glutaredoxin"/>
    <property type="match status" value="3"/>
</dbReference>
<dbReference type="InterPro" id="IPR046349">
    <property type="entry name" value="C1-like_sf"/>
</dbReference>
<dbReference type="InterPro" id="IPR004146">
    <property type="entry name" value="DC1"/>
</dbReference>
<dbReference type="InterPro" id="IPR052259">
    <property type="entry name" value="Nucleoredoxin-like"/>
</dbReference>
<dbReference type="InterPro" id="IPR012336">
    <property type="entry name" value="Thioredoxin-like_fold"/>
</dbReference>
<dbReference type="InterPro" id="IPR036249">
    <property type="entry name" value="Thioredoxin-like_sf"/>
</dbReference>
<dbReference type="InterPro" id="IPR017937">
    <property type="entry name" value="Thioredoxin_CS"/>
</dbReference>
<dbReference type="InterPro" id="IPR013766">
    <property type="entry name" value="Thioredoxin_domain"/>
</dbReference>
<dbReference type="InterPro" id="IPR045870">
    <property type="entry name" value="TryX_NRX_thioredoxin_dom"/>
</dbReference>
<dbReference type="PANTHER" id="PTHR13871">
    <property type="entry name" value="THIOREDOXIN"/>
    <property type="match status" value="1"/>
</dbReference>
<dbReference type="PANTHER" id="PTHR13871:SF96">
    <property type="entry name" value="THIOREDOXIN DOMAIN-CONTAINING PROTEIN"/>
    <property type="match status" value="1"/>
</dbReference>
<dbReference type="Pfam" id="PF03107">
    <property type="entry name" value="C1_2"/>
    <property type="match status" value="1"/>
</dbReference>
<dbReference type="Pfam" id="PF13905">
    <property type="entry name" value="Thioredoxin_8"/>
    <property type="match status" value="3"/>
</dbReference>
<dbReference type="SUPFAM" id="SSF57889">
    <property type="entry name" value="Cysteine-rich domain"/>
    <property type="match status" value="1"/>
</dbReference>
<dbReference type="SUPFAM" id="SSF52833">
    <property type="entry name" value="Thioredoxin-like"/>
    <property type="match status" value="3"/>
</dbReference>
<dbReference type="PROSITE" id="PS00194">
    <property type="entry name" value="THIOREDOXIN_1"/>
    <property type="match status" value="1"/>
</dbReference>
<dbReference type="PROSITE" id="PS51352">
    <property type="entry name" value="THIOREDOXIN_2"/>
    <property type="match status" value="2"/>
</dbReference>
<protein>
    <recommendedName>
        <fullName>Probable nucleoredoxin 1</fullName>
        <shortName>AtNrx1</shortName>
        <ecNumber>1.8.1.8</ecNumber>
    </recommendedName>
</protein>
<comment type="function">
    <text evidence="2">Probable thiol-disulfide oxidoreductase required for pollen tube growth and pollen function in the pistil. Seems not to be required for in vitro pollen tube growth. May be involved in the generation of lipid signaling molecules in pistil.</text>
</comment>
<comment type="catalytic activity">
    <reaction>
        <text>[protein]-dithiol + NAD(+) = [protein]-disulfide + NADH + H(+)</text>
        <dbReference type="Rhea" id="RHEA:18749"/>
        <dbReference type="Rhea" id="RHEA-COMP:10593"/>
        <dbReference type="Rhea" id="RHEA-COMP:10594"/>
        <dbReference type="ChEBI" id="CHEBI:15378"/>
        <dbReference type="ChEBI" id="CHEBI:29950"/>
        <dbReference type="ChEBI" id="CHEBI:50058"/>
        <dbReference type="ChEBI" id="CHEBI:57540"/>
        <dbReference type="ChEBI" id="CHEBI:57945"/>
        <dbReference type="EC" id="1.8.1.8"/>
    </reaction>
</comment>
<comment type="catalytic activity">
    <reaction>
        <text>[protein]-dithiol + NADP(+) = [protein]-disulfide + NADPH + H(+)</text>
        <dbReference type="Rhea" id="RHEA:18753"/>
        <dbReference type="Rhea" id="RHEA-COMP:10593"/>
        <dbReference type="Rhea" id="RHEA-COMP:10594"/>
        <dbReference type="ChEBI" id="CHEBI:15378"/>
        <dbReference type="ChEBI" id="CHEBI:29950"/>
        <dbReference type="ChEBI" id="CHEBI:50058"/>
        <dbReference type="ChEBI" id="CHEBI:57783"/>
        <dbReference type="ChEBI" id="CHEBI:58349"/>
        <dbReference type="EC" id="1.8.1.8"/>
    </reaction>
</comment>
<comment type="disruption phenotype">
    <text evidence="2">Disruption of pollen tube growth in the pistil and reduction in the ability to target ovules.</text>
</comment>
<comment type="similarity">
    <text evidence="3">Belongs to the nucleoredoxin family.</text>
</comment>
<name>NRX1_ARATH</name>